<protein>
    <recommendedName>
        <fullName evidence="1">Lipid A palmitoyltransferase PagP</fullName>
        <ecNumber evidence="1">2.3.1.251</ecNumber>
    </recommendedName>
    <alternativeName>
        <fullName evidence="1">Lipid A acylation protein</fullName>
    </alternativeName>
</protein>
<evidence type="ECO:0000255" key="1">
    <source>
        <dbReference type="HAMAP-Rule" id="MF_00837"/>
    </source>
</evidence>
<evidence type="ECO:0000269" key="2">
    <source>
    </source>
</evidence>
<evidence type="ECO:0000305" key="3"/>
<dbReference type="EC" id="2.3.1.251" evidence="1"/>
<dbReference type="EMBL" id="AE005174">
    <property type="protein sequence ID" value="AAG54957.1"/>
    <property type="molecule type" value="Genomic_DNA"/>
</dbReference>
<dbReference type="EMBL" id="BA000007">
    <property type="protein sequence ID" value="BAB34084.1"/>
    <property type="molecule type" value="Genomic_DNA"/>
</dbReference>
<dbReference type="PIR" id="A85562">
    <property type="entry name" value="A85562"/>
</dbReference>
<dbReference type="PIR" id="E90711">
    <property type="entry name" value="E90711"/>
</dbReference>
<dbReference type="RefSeq" id="NP_308688.1">
    <property type="nucleotide sequence ID" value="NC_002695.1"/>
</dbReference>
<dbReference type="RefSeq" id="WP_001301703.1">
    <property type="nucleotide sequence ID" value="NZ_VOAI01000012.1"/>
</dbReference>
<dbReference type="SMR" id="Q8XBR9"/>
<dbReference type="STRING" id="155864.Z0767"/>
<dbReference type="GeneID" id="917021"/>
<dbReference type="KEGG" id="ece:Z0767"/>
<dbReference type="KEGG" id="ecs:ECs_0661"/>
<dbReference type="PATRIC" id="fig|386585.9.peg.772"/>
<dbReference type="eggNOG" id="ENOG502Z7SY">
    <property type="taxonomic scope" value="Bacteria"/>
</dbReference>
<dbReference type="HOGENOM" id="CLU_104099_0_0_6"/>
<dbReference type="OMA" id="FFAWLRW"/>
<dbReference type="Proteomes" id="UP000000558">
    <property type="component" value="Chromosome"/>
</dbReference>
<dbReference type="Proteomes" id="UP000002519">
    <property type="component" value="Chromosome"/>
</dbReference>
<dbReference type="GO" id="GO:0009279">
    <property type="term" value="C:cell outer membrane"/>
    <property type="evidence" value="ECO:0000250"/>
    <property type="project" value="UniProtKB"/>
</dbReference>
<dbReference type="GO" id="GO:0016416">
    <property type="term" value="F:O-palmitoyltransferase activity"/>
    <property type="evidence" value="ECO:0000315"/>
    <property type="project" value="UniProtKB"/>
</dbReference>
<dbReference type="GO" id="GO:0009245">
    <property type="term" value="P:lipid A biosynthetic process"/>
    <property type="evidence" value="ECO:0000315"/>
    <property type="project" value="UniProtKB"/>
</dbReference>
<dbReference type="FunFam" id="2.40.160.20:FF:000002">
    <property type="entry name" value="Lipid A palmitoyltransferase PagP"/>
    <property type="match status" value="1"/>
</dbReference>
<dbReference type="Gene3D" id="2.40.160.20">
    <property type="match status" value="1"/>
</dbReference>
<dbReference type="HAMAP" id="MF_00837">
    <property type="entry name" value="PagP_transferase"/>
    <property type="match status" value="1"/>
</dbReference>
<dbReference type="InterPro" id="IPR009746">
    <property type="entry name" value="LipidA_acyl_PagP"/>
</dbReference>
<dbReference type="InterPro" id="IPR011250">
    <property type="entry name" value="OMP/PagP_b-brl"/>
</dbReference>
<dbReference type="NCBIfam" id="NF008271">
    <property type="entry name" value="PRK11045.1"/>
    <property type="match status" value="1"/>
</dbReference>
<dbReference type="Pfam" id="PF07017">
    <property type="entry name" value="PagP"/>
    <property type="match status" value="1"/>
</dbReference>
<dbReference type="SUPFAM" id="SSF56925">
    <property type="entry name" value="OMPA-like"/>
    <property type="match status" value="1"/>
</dbReference>
<proteinExistence type="evidence at protein level"/>
<gene>
    <name evidence="1" type="primary">pagP</name>
    <name type="synonym">crcA</name>
    <name type="ordered locus">ECs0661</name>
    <name type="ordered locus">Z0767</name>
</gene>
<organism>
    <name type="scientific">Escherichia coli O157:H7</name>
    <dbReference type="NCBI Taxonomy" id="83334"/>
    <lineage>
        <taxon>Bacteria</taxon>
        <taxon>Pseudomonadati</taxon>
        <taxon>Pseudomonadota</taxon>
        <taxon>Gammaproteobacteria</taxon>
        <taxon>Enterobacterales</taxon>
        <taxon>Enterobacteriaceae</taxon>
        <taxon>Escherichia</taxon>
    </lineage>
</organism>
<comment type="function">
    <text evidence="1 2">Transfers a palmitate residue from the sn-1 position of a phospholipid to the N-linked hydroxymyristate on the proximal unit of lipid A or its precursors.</text>
</comment>
<comment type="catalytic activity">
    <reaction evidence="1">
        <text>lipid A (E. coli) + a 1-hexadecanoyl-2-acyl-sn-glycero-3-phosphocholine = hepta-acyl lipid A (E. coli) + a 2-acyl-sn-glycero-3-phosphocholine</text>
        <dbReference type="Rhea" id="RHEA:46864"/>
        <dbReference type="ChEBI" id="CHEBI:57875"/>
        <dbReference type="ChEBI" id="CHEBI:77369"/>
        <dbReference type="ChEBI" id="CHEBI:87048"/>
        <dbReference type="ChEBI" id="CHEBI:134257"/>
        <dbReference type="EC" id="2.3.1.251"/>
    </reaction>
</comment>
<comment type="catalytic activity">
    <reaction evidence="1">
        <text>lipid IIA + a 1-hexadecanoyl-2-acyl-sn-glycero-3-phosphocholine = lipid IIB + a 2-acyl-sn-glycero-3-phosphocholine</text>
        <dbReference type="Rhea" id="RHEA:46872"/>
        <dbReference type="ChEBI" id="CHEBI:57875"/>
        <dbReference type="ChEBI" id="CHEBI:77369"/>
        <dbReference type="ChEBI" id="CHEBI:86226"/>
        <dbReference type="ChEBI" id="CHEBI:87058"/>
        <dbReference type="EC" id="2.3.1.251"/>
    </reaction>
</comment>
<comment type="catalytic activity">
    <reaction evidence="1">
        <text>lipid IVA (E. coli) + a 1-hexadecanoyl-2-acyl-sn-glycero-3-phosphocholine = lipid IVB (E. coli) + a 2-acyl-sn-glycero-3-phosphocholine</text>
        <dbReference type="Rhea" id="RHEA:46868"/>
        <dbReference type="ChEBI" id="CHEBI:57875"/>
        <dbReference type="ChEBI" id="CHEBI:58603"/>
        <dbReference type="ChEBI" id="CHEBI:77369"/>
        <dbReference type="ChEBI" id="CHEBI:87049"/>
        <dbReference type="EC" id="2.3.1.251"/>
    </reaction>
</comment>
<comment type="subunit">
    <text evidence="1">Homodimer.</text>
</comment>
<comment type="subcellular location">
    <subcellularLocation>
        <location evidence="1">Cell outer membrane</location>
    </subcellularLocation>
</comment>
<comment type="similarity">
    <text evidence="1 3">Belongs to the lipid A palmitoyltransferase family.</text>
</comment>
<keyword id="KW-0012">Acyltransferase</keyword>
<keyword id="KW-0998">Cell outer membrane</keyword>
<keyword id="KW-0472">Membrane</keyword>
<keyword id="KW-1185">Reference proteome</keyword>
<keyword id="KW-0732">Signal</keyword>
<keyword id="KW-0808">Transferase</keyword>
<feature type="signal peptide" evidence="1">
    <location>
        <begin position="1"/>
        <end position="25"/>
    </location>
</feature>
<feature type="chain" id="PRO_0000414452" description="Lipid A palmitoyltransferase PagP">
    <location>
        <begin position="26"/>
        <end position="186"/>
    </location>
</feature>
<feature type="active site" evidence="1">
    <location>
        <position position="58"/>
    </location>
</feature>
<feature type="active site" evidence="1">
    <location>
        <position position="101"/>
    </location>
</feature>
<feature type="active site" evidence="1">
    <location>
        <position position="102"/>
    </location>
</feature>
<feature type="site" description="Role in lipopolysaccharide recognition" evidence="1">
    <location>
        <position position="67"/>
    </location>
</feature>
<feature type="site" description="Role in the phospholipid gating" evidence="1">
    <location>
        <position position="172"/>
    </location>
</feature>
<accession>Q8XBR9</accession>
<accession>Q7AGP7</accession>
<sequence>MNVSKYVAIFSFVFIQLISVGKVFANADEWMTTFRENIVQTWQQPEHYDLYIPAITWHARFAYDKEKTDRYNERPWGGGFGLSRWDEKGNWHGLYAMAFKDSWNKWEPIAGYGWESTWRPLADENFHLGLGFTAGVTARDNWNYIPLPVLLPLASVGYGPVTFQMTYIPGTYNNGNVYFAWMRFQF</sequence>
<reference key="1">
    <citation type="journal article" date="2001" name="Nature">
        <title>Genome sequence of enterohaemorrhagic Escherichia coli O157:H7.</title>
        <authorList>
            <person name="Perna N.T."/>
            <person name="Plunkett G. III"/>
            <person name="Burland V."/>
            <person name="Mau B."/>
            <person name="Glasner J.D."/>
            <person name="Rose D.J."/>
            <person name="Mayhew G.F."/>
            <person name="Evans P.S."/>
            <person name="Gregor J."/>
            <person name="Kirkpatrick H.A."/>
            <person name="Posfai G."/>
            <person name="Hackett J."/>
            <person name="Klink S."/>
            <person name="Boutin A."/>
            <person name="Shao Y."/>
            <person name="Miller L."/>
            <person name="Grotbeck E.J."/>
            <person name="Davis N.W."/>
            <person name="Lim A."/>
            <person name="Dimalanta E.T."/>
            <person name="Potamousis K."/>
            <person name="Apodaca J."/>
            <person name="Anantharaman T.S."/>
            <person name="Lin J."/>
            <person name="Yen G."/>
            <person name="Schwartz D.C."/>
            <person name="Welch R.A."/>
            <person name="Blattner F.R."/>
        </authorList>
    </citation>
    <scope>NUCLEOTIDE SEQUENCE [LARGE SCALE GENOMIC DNA]</scope>
    <source>
        <strain>O157:H7 / EDL933 / ATCC 700927 / EHEC</strain>
    </source>
</reference>
<reference key="2">
    <citation type="journal article" date="2001" name="DNA Res.">
        <title>Complete genome sequence of enterohemorrhagic Escherichia coli O157:H7 and genomic comparison with a laboratory strain K-12.</title>
        <authorList>
            <person name="Hayashi T."/>
            <person name="Makino K."/>
            <person name="Ohnishi M."/>
            <person name="Kurokawa K."/>
            <person name="Ishii K."/>
            <person name="Yokoyama K."/>
            <person name="Han C.-G."/>
            <person name="Ohtsubo E."/>
            <person name="Nakayama K."/>
            <person name="Murata T."/>
            <person name="Tanaka M."/>
            <person name="Tobe T."/>
            <person name="Iida T."/>
            <person name="Takami H."/>
            <person name="Honda T."/>
            <person name="Sasakawa C."/>
            <person name="Ogasawara N."/>
            <person name="Yasunaga T."/>
            <person name="Kuhara S."/>
            <person name="Shiba T."/>
            <person name="Hattori M."/>
            <person name="Shinagawa H."/>
        </authorList>
    </citation>
    <scope>NUCLEOTIDE SEQUENCE [LARGE SCALE GENOMIC DNA]</scope>
    <source>
        <strain>O157:H7 / Sakai / RIMD 0509952 / EHEC</strain>
    </source>
</reference>
<reference key="3">
    <citation type="journal article" date="2008" name="J. Biol. Chem.">
        <title>PagP activation in the outer membrane triggers R3 core oligosaccharide truncation in the cytoplasm of Escherichia coli O157:H7.</title>
        <authorList>
            <person name="Smith A.E."/>
            <person name="Kim S.H."/>
            <person name="Liu F."/>
            <person name="Jia W."/>
            <person name="Vinogradov E."/>
            <person name="Gyles C.L."/>
            <person name="Bishop R.E."/>
        </authorList>
    </citation>
    <scope>FUNCTION AS PALMITOYL TRANSFERASE</scope>
</reference>
<name>PAGP_ECO57</name>